<keyword id="KW-0053">Apoptosis</keyword>
<keyword id="KW-0221">Differentiation</keyword>
<keyword id="KW-0238">DNA-binding</keyword>
<keyword id="KW-0524">Neurogenesis</keyword>
<keyword id="KW-0539">Nucleus</keyword>
<keyword id="KW-1185">Reference proteome</keyword>
<keyword id="KW-0724">Serotonin biosynthesis</keyword>
<keyword id="KW-0804">Transcription</keyword>
<keyword id="KW-0805">Transcription regulation</keyword>
<proteinExistence type="evidence at protein level"/>
<name>HLH3_CAEEL</name>
<reference evidence="8" key="1">
    <citation type="submission" date="1996-11" db="EMBL/GenBank/DDBJ databases">
        <title>hlh-3, a Caenorhabditis elegans achaete-scute like gene.</title>
        <authorList>
            <person name="Yuan J."/>
            <person name="Greenwald I."/>
            <person name="Cole M.D."/>
        </authorList>
    </citation>
    <scope>NUCLEOTIDE SEQUENCE [MRNA]</scope>
</reference>
<reference evidence="9" key="2">
    <citation type="journal article" date="1998" name="Science">
        <title>Genome sequence of the nematode C. elegans: a platform for investigating biology.</title>
        <authorList>
            <consortium name="The C. elegans sequencing consortium"/>
        </authorList>
    </citation>
    <scope>NUCLEOTIDE SEQUENCE [LARGE SCALE GENOMIC DNA]</scope>
    <source>
        <strain evidence="9">Bristol N2</strain>
    </source>
</reference>
<reference evidence="7" key="3">
    <citation type="journal article" date="1997" name="Development">
        <title>A C. elegans E/Daughterless bHLH protein marks neuronal but not striated muscle development.</title>
        <authorList>
            <person name="Krause M."/>
            <person name="Park M."/>
            <person name="Zhang J.M."/>
            <person name="Yuan J."/>
            <person name="Harfe B."/>
            <person name="Xu S.Q."/>
            <person name="Greenwald I."/>
            <person name="Cole M."/>
            <person name="Paterson B."/>
            <person name="Fire A."/>
        </authorList>
    </citation>
    <scope>INTERACTION WITH HLH-2</scope>
    <scope>DEVELOPMENTAL STAGE</scope>
</reference>
<reference evidence="7" key="4">
    <citation type="journal article" date="2003" name="Development">
        <title>The Snail-like CES-1 protein of C. elegans can block the expression of the BH3-only cell-death activator gene egl-1 by antagonizing the function of bHLH proteins.</title>
        <authorList>
            <person name="Thellmann M."/>
            <person name="Hatzold J."/>
            <person name="Conradt B."/>
        </authorList>
    </citation>
    <scope>FUNCTION</scope>
    <scope>INTERACTION WITH HLH-2</scope>
    <scope>DISRUPTION PHENOTYPE</scope>
</reference>
<reference evidence="7" key="5">
    <citation type="journal article" date="2008" name="Mech. Dev.">
        <title>HLH-3 is a C. elegans Achaete/Scute protein required for differentiation of the hermaphrodite-specific motor neurons.</title>
        <authorList>
            <person name="Doonan R."/>
            <person name="Hatzold J."/>
            <person name="Raut S."/>
            <person name="Conradt B."/>
            <person name="Alfonso A."/>
        </authorList>
    </citation>
    <scope>FUNCTION</scope>
    <scope>SUBCELLULAR LOCATION</scope>
    <scope>DEVELOPMENTAL STAGE</scope>
    <scope>DISRUPTION PHENOTYPE</scope>
</reference>
<reference key="6">
    <citation type="journal article" date="2016" name="PLoS Genet.">
        <title>Cell-Autonomous and Non-Cell-Autonomous Regulation of a Feeding State-Dependent Chemoreceptor Gene via MEF-2 and bHLH Transcription Factors.</title>
        <authorList>
            <person name="Gruner M."/>
            <person name="Grubbs J."/>
            <person name="McDonagh A."/>
            <person name="Valdes D."/>
            <person name="Winbush A."/>
            <person name="van der Linden A.M."/>
        </authorList>
    </citation>
    <scope>FUNCTION</scope>
    <scope>TISSUE SPECIFICITY</scope>
    <scope>DEVELOPMENTAL STAGE</scope>
    <scope>MUTAGENESIS OF 41-GLN--TYR-170</scope>
</reference>
<protein>
    <recommendedName>
        <fullName evidence="7">Helix-loop-helix protein 3</fullName>
    </recommendedName>
</protein>
<organism>
    <name type="scientific">Caenorhabditis elegans</name>
    <dbReference type="NCBI Taxonomy" id="6239"/>
    <lineage>
        <taxon>Eukaryota</taxon>
        <taxon>Metazoa</taxon>
        <taxon>Ecdysozoa</taxon>
        <taxon>Nematoda</taxon>
        <taxon>Chromadorea</taxon>
        <taxon>Rhabditida</taxon>
        <taxon>Rhabditina</taxon>
        <taxon>Rhabditomorpha</taxon>
        <taxon>Rhabditoidea</taxon>
        <taxon>Rhabditidae</taxon>
        <taxon>Peloderinae</taxon>
        <taxon>Caenorhabditis</taxon>
    </lineage>
</organism>
<dbReference type="EMBL" id="U78953">
    <property type="protein sequence ID" value="AAB38323.1"/>
    <property type="status" value="ALT_FRAME"/>
    <property type="molecule type" value="mRNA"/>
</dbReference>
<dbReference type="EMBL" id="BX284602">
    <property type="protein sequence ID" value="CAA92758.2"/>
    <property type="molecule type" value="Genomic_DNA"/>
</dbReference>
<dbReference type="RefSeq" id="NP_495938.4">
    <property type="nucleotide sequence ID" value="NM_063537.6"/>
</dbReference>
<dbReference type="SMR" id="Q22717"/>
<dbReference type="FunCoup" id="Q22717">
    <property type="interactions" value="115"/>
</dbReference>
<dbReference type="IntAct" id="Q22717">
    <property type="interactions" value="7"/>
</dbReference>
<dbReference type="STRING" id="6239.T24B8.6.1"/>
<dbReference type="PaxDb" id="6239-T24B8.6"/>
<dbReference type="EnsemblMetazoa" id="T24B8.6.1">
    <property type="protein sequence ID" value="T24B8.6.1"/>
    <property type="gene ID" value="WBGene00001950"/>
</dbReference>
<dbReference type="GeneID" id="174447"/>
<dbReference type="KEGG" id="cel:CELE_T24B8.6"/>
<dbReference type="UCSC" id="T24B8.6">
    <property type="organism name" value="c. elegans"/>
</dbReference>
<dbReference type="AGR" id="WB:WBGene00001950"/>
<dbReference type="CTD" id="174447"/>
<dbReference type="WormBase" id="T24B8.6">
    <property type="protein sequence ID" value="CE42887"/>
    <property type="gene ID" value="WBGene00001950"/>
    <property type="gene designation" value="hlh-3"/>
</dbReference>
<dbReference type="eggNOG" id="KOG4029">
    <property type="taxonomic scope" value="Eukaryota"/>
</dbReference>
<dbReference type="HOGENOM" id="CLU_1572016_0_0_1"/>
<dbReference type="InParanoid" id="Q22717"/>
<dbReference type="OMA" id="YSHTETY"/>
<dbReference type="OrthoDB" id="5976910at2759"/>
<dbReference type="PhylomeDB" id="Q22717"/>
<dbReference type="SignaLink" id="Q22717"/>
<dbReference type="PRO" id="PR:Q22717"/>
<dbReference type="Proteomes" id="UP000001940">
    <property type="component" value="Chromosome II"/>
</dbReference>
<dbReference type="Bgee" id="WBGene00001950">
    <property type="expression patterns" value="Expressed in embryo and 3 other cell types or tissues"/>
</dbReference>
<dbReference type="GO" id="GO:0005634">
    <property type="term" value="C:nucleus"/>
    <property type="evidence" value="ECO:0000314"/>
    <property type="project" value="WormBase"/>
</dbReference>
<dbReference type="GO" id="GO:0090575">
    <property type="term" value="C:RNA polymerase II transcription regulator complex"/>
    <property type="evidence" value="ECO:0000314"/>
    <property type="project" value="WormBase"/>
</dbReference>
<dbReference type="GO" id="GO:0000981">
    <property type="term" value="F:DNA-binding transcription factor activity, RNA polymerase II-specific"/>
    <property type="evidence" value="ECO:0000318"/>
    <property type="project" value="GO_Central"/>
</dbReference>
<dbReference type="GO" id="GO:0046982">
    <property type="term" value="F:protein heterodimerization activity"/>
    <property type="evidence" value="ECO:0000353"/>
    <property type="project" value="WormBase"/>
</dbReference>
<dbReference type="GO" id="GO:0000978">
    <property type="term" value="F:RNA polymerase II cis-regulatory region sequence-specific DNA binding"/>
    <property type="evidence" value="ECO:0000315"/>
    <property type="project" value="UniProtKB"/>
</dbReference>
<dbReference type="GO" id="GO:0043565">
    <property type="term" value="F:sequence-specific DNA binding"/>
    <property type="evidence" value="ECO:0000314"/>
    <property type="project" value="WormBase"/>
</dbReference>
<dbReference type="GO" id="GO:0006915">
    <property type="term" value="P:apoptotic process"/>
    <property type="evidence" value="ECO:0007669"/>
    <property type="project" value="UniProtKB-KW"/>
</dbReference>
<dbReference type="GO" id="GO:0030182">
    <property type="term" value="P:neuron differentiation"/>
    <property type="evidence" value="ECO:0000315"/>
    <property type="project" value="WormBase"/>
</dbReference>
<dbReference type="GO" id="GO:0043068">
    <property type="term" value="P:positive regulation of programmed cell death"/>
    <property type="evidence" value="ECO:0000315"/>
    <property type="project" value="WormBase"/>
</dbReference>
<dbReference type="GO" id="GO:0045944">
    <property type="term" value="P:positive regulation of transcription by RNA polymerase II"/>
    <property type="evidence" value="ECO:0000315"/>
    <property type="project" value="UniProtKB"/>
</dbReference>
<dbReference type="GO" id="GO:0048841">
    <property type="term" value="P:regulation of axon extension involved in axon guidance"/>
    <property type="evidence" value="ECO:0000315"/>
    <property type="project" value="WormBase"/>
</dbReference>
<dbReference type="GO" id="GO:0046662">
    <property type="term" value="P:regulation of egg-laying behavior"/>
    <property type="evidence" value="ECO:0000315"/>
    <property type="project" value="WormBase"/>
</dbReference>
<dbReference type="GO" id="GO:0032094">
    <property type="term" value="P:response to food"/>
    <property type="evidence" value="ECO:0000315"/>
    <property type="project" value="UniProtKB"/>
</dbReference>
<dbReference type="GO" id="GO:0042427">
    <property type="term" value="P:serotonin biosynthetic process"/>
    <property type="evidence" value="ECO:0007669"/>
    <property type="project" value="UniProtKB-KW"/>
</dbReference>
<dbReference type="CDD" id="cd11418">
    <property type="entry name" value="bHLH_TS_ASCL"/>
    <property type="match status" value="1"/>
</dbReference>
<dbReference type="FunFam" id="4.10.280.10:FF:000029">
    <property type="entry name" value="Achaete-scute family bHLH transcription factor 1"/>
    <property type="match status" value="1"/>
</dbReference>
<dbReference type="Gene3D" id="4.10.280.10">
    <property type="entry name" value="Helix-loop-helix DNA-binding domain"/>
    <property type="match status" value="1"/>
</dbReference>
<dbReference type="InterPro" id="IPR011598">
    <property type="entry name" value="bHLH_dom"/>
</dbReference>
<dbReference type="InterPro" id="IPR036638">
    <property type="entry name" value="HLH_DNA-bd_sf"/>
</dbReference>
<dbReference type="InterPro" id="IPR015660">
    <property type="entry name" value="MASH1/Ascl1a-like"/>
</dbReference>
<dbReference type="PANTHER" id="PTHR13935:SF106">
    <property type="entry name" value="ACHAETE-SCUTE COMPLEX PROTEIN T5-RELATED"/>
    <property type="match status" value="1"/>
</dbReference>
<dbReference type="PANTHER" id="PTHR13935">
    <property type="entry name" value="ACHAETE-SCUTE TRANSCRIPTION FACTOR-RELATED"/>
    <property type="match status" value="1"/>
</dbReference>
<dbReference type="Pfam" id="PF00010">
    <property type="entry name" value="HLH"/>
    <property type="match status" value="1"/>
</dbReference>
<dbReference type="SMART" id="SM00353">
    <property type="entry name" value="HLH"/>
    <property type="match status" value="1"/>
</dbReference>
<dbReference type="SUPFAM" id="SSF47459">
    <property type="entry name" value="HLH, helix-loop-helix DNA-binding domain"/>
    <property type="match status" value="1"/>
</dbReference>
<dbReference type="PROSITE" id="PS50888">
    <property type="entry name" value="BHLH"/>
    <property type="match status" value="1"/>
</dbReference>
<feature type="chain" id="PRO_0000439501" description="Helix-loop-helix protein 3">
    <location>
        <begin position="1"/>
        <end position="170"/>
    </location>
</feature>
<feature type="domain" description="bHLH" evidence="1">
    <location>
        <begin position="26"/>
        <end position="79"/>
    </location>
</feature>
<feature type="region of interest" description="Disordered" evidence="2">
    <location>
        <begin position="1"/>
        <end position="42"/>
    </location>
</feature>
<feature type="region of interest" description="Basic motif; degenerate" evidence="1">
    <location>
        <begin position="26"/>
        <end position="39"/>
    </location>
</feature>
<feature type="region of interest" description="Helix-loop-helix motif" evidence="1">
    <location>
        <begin position="40"/>
        <end position="79"/>
    </location>
</feature>
<feature type="region of interest" description="Disordered" evidence="2">
    <location>
        <begin position="118"/>
        <end position="170"/>
    </location>
</feature>
<feature type="compositionally biased region" description="Low complexity" evidence="2">
    <location>
        <begin position="1"/>
        <end position="26"/>
    </location>
</feature>
<feature type="compositionally biased region" description="Basic and acidic residues" evidence="2">
    <location>
        <begin position="30"/>
        <end position="40"/>
    </location>
</feature>
<feature type="compositionally biased region" description="Low complexity" evidence="2">
    <location>
        <begin position="143"/>
        <end position="157"/>
    </location>
</feature>
<feature type="mutagenesis site" description="In ot354; decreased expression of srh-234 in the cell body of ADL sensory neurons." evidence="5">
    <location>
        <begin position="41"/>
        <end position="170"/>
    </location>
</feature>
<evidence type="ECO:0000255" key="1">
    <source>
        <dbReference type="PROSITE-ProRule" id="PRU00981"/>
    </source>
</evidence>
<evidence type="ECO:0000256" key="2">
    <source>
        <dbReference type="SAM" id="MobiDB-lite"/>
    </source>
</evidence>
<evidence type="ECO:0000269" key="3">
    <source>
    </source>
</evidence>
<evidence type="ECO:0000269" key="4">
    <source>
    </source>
</evidence>
<evidence type="ECO:0000269" key="5">
    <source>
    </source>
</evidence>
<evidence type="ECO:0000269" key="6">
    <source>
    </source>
</evidence>
<evidence type="ECO:0000305" key="7"/>
<evidence type="ECO:0000312" key="8">
    <source>
        <dbReference type="EMBL" id="AAB38323.1"/>
    </source>
</evidence>
<evidence type="ECO:0000312" key="9">
    <source>
        <dbReference type="Proteomes" id="UP000001940"/>
    </source>
</evidence>
<evidence type="ECO:0000312" key="10">
    <source>
        <dbReference type="WormBase" id="T24B8.6"/>
    </source>
</evidence>
<gene>
    <name evidence="10" type="primary">hlh-3</name>
    <name evidence="10" type="ORF">T24B8.6</name>
</gene>
<accession>Q22717</accession>
<accession>P90977</accession>
<comment type="function">
    <text evidence="3 4 5">Probable transcriptional regulator (PubMed:12874127, PubMed:18586090). May mediate transcriptional activation by binding to the E-box motif 5'-CANNTG-3' (PubMed:12874127, PubMed:9187144). Plays a role in the differentiation of the hermaphrodite-specific motor neurons (HSN) that are required for normal egg laying (PubMed:18586090). Might play a role in serotonin production by regulating expression of the tryptophan hydrolase tph-1 which catalyzes serotonin synthesis, in the HSN neurons (PubMed:18586090). Also plays a role in HSN axon guidance towards the vulva and the ventral nerve cord, possibly by promoting the expression of the netrin receptor unc-40 (PubMed:18586090). Under feeding conditions, involved in the regulation of the srh-234 chemoreceptor encoding gene expression in the ADL sensory neurons (PubMed:27487365). Together with hlh-2, involved in the induction of programmed cell death in the sister cells of the serotonergic neurosecretory motor (NSM) neurons, probably through the activation of egl-1 transcription (PubMed:12874127).</text>
</comment>
<comment type="subunit">
    <text evidence="3 6">Efficient DNA binding requires dimerization with another bHLH protein. Forms a heterodimer with hlh-2.</text>
</comment>
<comment type="subcellular location">
    <subcellularLocation>
        <location evidence="1 4">Nucleus</location>
    </subcellularLocation>
</comment>
<comment type="tissue specificity">
    <text evidence="5">Expressed in the ADL sensory neurons.</text>
</comment>
<comment type="developmental stage">
    <text evidence="4 5 6">Expressed in neuronal precursor cells during embryogenesis (PubMed:27487365, PubMed:9187144). Expressed in nerve ring ganglia neurons in very early larval stage L1, which is undetectable by early larval stage L1 (PubMed:18586090). During L1, expressed in the P cell lineage, specifically in the ectodermal-like P cells, and expression persists in the primary and secondary neural precursors of the P cell lineages (PubMed:18586090). Later, appears to be expressed in all 53 of the resulting postmitotic motor neurons during larval stage L1 (PubMed:18586090). Expression in most of these neurons is undetectable by larval stage L2 (PubMed:18586090). Also expressed in the hermaphrodite-specific motor neurons (HSN) and in the ventral type C (VC) motor neurons throughout larval development (PubMed:18586090). Expression in the HSNs persists until late L4 larval stage (PubMed:18586090).</text>
</comment>
<comment type="disruption phenotype">
    <text evidence="3 4">Egg-laying defective (PubMed:18586090). Reduced expression of the tryptophan hydroxylase tph-1 which leads to reduced production of the neurotransmitter serotonin in the hermaphrodite-specific motor neurons (HSN) (PubMed:18586090). Inappropriate lateral projection of HSN axons (PubMed:18586090). Lack of netrin receptor unc-40 expression in a subset of HSN and VC motor neurons (PubMed:18586090). RNAi-mediated knockdown prevents cell death of a subset of the serotonergic neurosecretory motor (NSM) neuron sister cells, and survival of NSM sister cells is increased in an hlh-2 mutant background (PubMed:12874127).</text>
</comment>
<comment type="caution">
    <text evidence="1">Contains a degenerate basic motif not likely to bind DNA.</text>
</comment>
<comment type="sequence caution" evidence="7">
    <conflict type="frameshift">
        <sequence resource="EMBL-CDS" id="AAB38323"/>
    </conflict>
</comment>
<sequence>MTASTSSTPSTSTKIPSSSKSSVTKQTKQKRNERERKRVDQVNQGFVLLQERVPKAAGNKAKLSKVETLREAARYIQELQKQLGMSSTSFHNSMPADFPTPEQSPVYPQSVCSMMAQTPSPSYTSPYYPPPQMMSSNQHDMSSHYYQESSSSSASTSGDHHSFYSHTETY</sequence>